<accession>B1JNN7</accession>
<evidence type="ECO:0000255" key="1">
    <source>
        <dbReference type="HAMAP-Rule" id="MF_00634"/>
    </source>
</evidence>
<sequence>MSAVLSTENGLILKLYIQPKASRDQIVGLHGDELKVAITAPPVDGQANAHLVKFIAKQFRVAKSQVIIEKGELGRHKQIKVINPQQIPPEVTILLE</sequence>
<dbReference type="EMBL" id="CP000950">
    <property type="protein sequence ID" value="ACA67129.1"/>
    <property type="molecule type" value="Genomic_DNA"/>
</dbReference>
<dbReference type="SMR" id="B1JNN7"/>
<dbReference type="KEGG" id="ypy:YPK_0828"/>
<dbReference type="PATRIC" id="fig|502800.11.peg.1454"/>
<dbReference type="GO" id="GO:0005737">
    <property type="term" value="C:cytoplasm"/>
    <property type="evidence" value="ECO:0007669"/>
    <property type="project" value="TreeGrafter"/>
</dbReference>
<dbReference type="Gene3D" id="3.30.1200.10">
    <property type="entry name" value="YggU-like"/>
    <property type="match status" value="1"/>
</dbReference>
<dbReference type="HAMAP" id="MF_00634">
    <property type="entry name" value="UPF0235"/>
    <property type="match status" value="1"/>
</dbReference>
<dbReference type="InterPro" id="IPR003746">
    <property type="entry name" value="DUF167"/>
</dbReference>
<dbReference type="InterPro" id="IPR036591">
    <property type="entry name" value="YggU-like_sf"/>
</dbReference>
<dbReference type="NCBIfam" id="TIGR00251">
    <property type="entry name" value="DUF167 family protein"/>
    <property type="match status" value="1"/>
</dbReference>
<dbReference type="NCBIfam" id="NF003466">
    <property type="entry name" value="PRK05090.1"/>
    <property type="match status" value="1"/>
</dbReference>
<dbReference type="PANTHER" id="PTHR13420">
    <property type="entry name" value="UPF0235 PROTEIN C15ORF40"/>
    <property type="match status" value="1"/>
</dbReference>
<dbReference type="PANTHER" id="PTHR13420:SF7">
    <property type="entry name" value="UPF0235 PROTEIN C15ORF40"/>
    <property type="match status" value="1"/>
</dbReference>
<dbReference type="Pfam" id="PF02594">
    <property type="entry name" value="DUF167"/>
    <property type="match status" value="1"/>
</dbReference>
<dbReference type="SMART" id="SM01152">
    <property type="entry name" value="DUF167"/>
    <property type="match status" value="1"/>
</dbReference>
<dbReference type="SUPFAM" id="SSF69786">
    <property type="entry name" value="YggU-like"/>
    <property type="match status" value="1"/>
</dbReference>
<name>Y828_YERPY</name>
<comment type="similarity">
    <text evidence="1">Belongs to the UPF0235 family.</text>
</comment>
<organism>
    <name type="scientific">Yersinia pseudotuberculosis serotype O:3 (strain YPIII)</name>
    <dbReference type="NCBI Taxonomy" id="502800"/>
    <lineage>
        <taxon>Bacteria</taxon>
        <taxon>Pseudomonadati</taxon>
        <taxon>Pseudomonadota</taxon>
        <taxon>Gammaproteobacteria</taxon>
        <taxon>Enterobacterales</taxon>
        <taxon>Yersiniaceae</taxon>
        <taxon>Yersinia</taxon>
    </lineage>
</organism>
<proteinExistence type="inferred from homology"/>
<protein>
    <recommendedName>
        <fullName evidence="1">UPF0235 protein YPK_0828</fullName>
    </recommendedName>
</protein>
<gene>
    <name type="ordered locus">YPK_0828</name>
</gene>
<feature type="chain" id="PRO_1000130717" description="UPF0235 protein YPK_0828">
    <location>
        <begin position="1"/>
        <end position="96"/>
    </location>
</feature>
<reference key="1">
    <citation type="submission" date="2008-02" db="EMBL/GenBank/DDBJ databases">
        <title>Complete sequence of Yersinia pseudotuberculosis YPIII.</title>
        <authorList>
            <consortium name="US DOE Joint Genome Institute"/>
            <person name="Copeland A."/>
            <person name="Lucas S."/>
            <person name="Lapidus A."/>
            <person name="Glavina del Rio T."/>
            <person name="Dalin E."/>
            <person name="Tice H."/>
            <person name="Bruce D."/>
            <person name="Goodwin L."/>
            <person name="Pitluck S."/>
            <person name="Munk A.C."/>
            <person name="Brettin T."/>
            <person name="Detter J.C."/>
            <person name="Han C."/>
            <person name="Tapia R."/>
            <person name="Schmutz J."/>
            <person name="Larimer F."/>
            <person name="Land M."/>
            <person name="Hauser L."/>
            <person name="Challacombe J.F."/>
            <person name="Green L."/>
            <person name="Lindler L.E."/>
            <person name="Nikolich M.P."/>
            <person name="Richardson P."/>
        </authorList>
    </citation>
    <scope>NUCLEOTIDE SEQUENCE [LARGE SCALE GENOMIC DNA]</scope>
    <source>
        <strain>YPIII</strain>
    </source>
</reference>